<sequence length="678" mass="71914">MNIRMGTKGKRPLRSLTPRDKIHAIQRIHDGESKASVARDIGVPESTLRGWCKNEDKLRFMSRQSATDNLCADALGDKMDGGGGGGGGAGGGGLLGPPEKRQRLDGALPLNFSNKLKFDELAFKRSPLNGLDYSTNKNLADLGYNGLPVDYAAFNGGVKAKVFGADINRPAADPSLNAISPLSSLTHLSGLTGISQSPLAISFNELTTNLNLLAQLNPGLAAMSGLNSFPAGAGNLRTPKPSGQTPLQVQSPRSDSGDRSAQGLSVKNWAKQKPGEGQGSLNLSIKNEGKGGDIKSPSPSIAPSQMGGPMTLSNLAEDPLLYWLKSQQTMLGLNPLYPPTIPMGVTSPPIRSSTPQHMSQLAQTPPIPSAPLTPSSTPSGSLDEKNAAWYNWCKAFGASLHTLNPNAATLAALQANQLQQQVATTAAEGGSMGDPSNILYSHLTKETETPSVRSLSSNEQNPEADEATETDLDGEVEPEASGKPEDLSAAGKVMTPSQSPIAHSSGSRSPEPKAKTKTPETTNSTSECKKILDNMLFKMGGMEATGPLMPEQGSSESEGSFQDTSNPHTNNNDVSASNNNNNNNSNKTDEEEKAKYLDCTADEDIEAIRHGEKFLQWLENCSNPRVTAVQLMQLRFLIAAIKSGNETPMIEKSALPEDSEEHAAEEEGSGRGKSRRRK</sequence>
<protein>
    <recommendedName>
        <fullName evidence="8">Protein distal antenna</fullName>
    </recommendedName>
</protein>
<comment type="function">
    <text evidence="5 6">Probable transcription factor with a role in the retinal determination (RD) network. Regulates ato expression and is required for normal R8 induction and differentiation. Danr appears to repress Dan expression, but Dan is required for Danr expression anterior to the morphogenetic furrow (MF). Dan and Danr lie downstream of so and require dac function for highest levels of expression. Contributes to differentiation of antenna-specific characteristics; effector gene that acts downstream of homothorax (hth), Distal-less (Dll), cut (ct) and spineless (ss) genes to control differentiation of distal antennal structures.</text>
</comment>
<comment type="subunit">
    <text evidence="6">Homomers. Interacts with itself, danr, ey and dac to form a complex (or complexes) containing the RD factors.</text>
</comment>
<comment type="subcellular location">
    <subcellularLocation>
        <location evidence="1 5">Nucleus</location>
    </subcellularLocation>
</comment>
<comment type="tissue specificity">
    <text evidence="5 6">Coexpressed with danr in the presumptive distal antenna, but not in the leg imaginal disk. Both proteins are also expressed in the brain and the eye region of the eye-antenna disk. First detected in early L3 eye disks in cells surrounding the newly initiated MF. Levels are uniform and high anterior to the furrow, lower levels within and posterior to the furrow. Limited expression is seen in small groups of cells in leg and wing. These appear in the location of prominent sense organ progenitors at relatively late stages of disk development.</text>
</comment>
<comment type="disruption phenotype">
    <text evidence="5">Flies exhibit partial transformation of antenna toward leg identity and small rough eyes. Ectopic expression causes partial transformation of distal leg structures toward antennal identity and antennal precursors into eye tissue.</text>
</comment>
<proteinExistence type="evidence at protein level"/>
<dbReference type="EMBL" id="AE014297">
    <property type="protein sequence ID" value="AAF56411.2"/>
    <property type="molecule type" value="Genomic_DNA"/>
</dbReference>
<dbReference type="EMBL" id="AY051924">
    <property type="protein sequence ID" value="AAK93348.1"/>
    <property type="molecule type" value="mRNA"/>
</dbReference>
<dbReference type="RefSeq" id="NP_001262949.1">
    <property type="nucleotide sequence ID" value="NM_001276020.1"/>
</dbReference>
<dbReference type="RefSeq" id="NP_651346.1">
    <property type="nucleotide sequence ID" value="NM_143089.4"/>
</dbReference>
<dbReference type="PDB" id="2ELH">
    <property type="method" value="NMR"/>
    <property type="chains" value="A=1-80"/>
</dbReference>
<dbReference type="PDBsum" id="2ELH"/>
<dbReference type="SMR" id="Q9VBW6"/>
<dbReference type="BioGRID" id="67943">
    <property type="interactions" value="14"/>
</dbReference>
<dbReference type="FunCoup" id="Q9VBW6">
    <property type="interactions" value="166"/>
</dbReference>
<dbReference type="IntAct" id="Q9VBW6">
    <property type="interactions" value="10"/>
</dbReference>
<dbReference type="STRING" id="7227.FBpp0303320"/>
<dbReference type="GlyGen" id="Q9VBW6">
    <property type="glycosylation" value="1 site"/>
</dbReference>
<dbReference type="iPTMnet" id="Q9VBW6"/>
<dbReference type="PaxDb" id="7227-FBpp0303321"/>
<dbReference type="DNASU" id="43023"/>
<dbReference type="EnsemblMetazoa" id="FBtr0084803">
    <property type="protein sequence ID" value="FBpp0084178"/>
    <property type="gene ID" value="FBgn0039286"/>
</dbReference>
<dbReference type="EnsemblMetazoa" id="FBtr0330289">
    <property type="protein sequence ID" value="FBpp0303321"/>
    <property type="gene ID" value="FBgn0039286"/>
</dbReference>
<dbReference type="GeneID" id="43023"/>
<dbReference type="KEGG" id="dme:Dmel_CG11849"/>
<dbReference type="UCSC" id="CG11849-RA">
    <property type="organism name" value="d. melanogaster"/>
</dbReference>
<dbReference type="AGR" id="FB:FBgn0039286"/>
<dbReference type="CTD" id="43023"/>
<dbReference type="FlyBase" id="FBgn0039286">
    <property type="gene designation" value="dan"/>
</dbReference>
<dbReference type="VEuPathDB" id="VectorBase:FBgn0039286"/>
<dbReference type="eggNOG" id="ENOG502S5K1">
    <property type="taxonomic scope" value="Eukaryota"/>
</dbReference>
<dbReference type="GeneTree" id="ENSGT00530000068878"/>
<dbReference type="HOGENOM" id="CLU_405596_0_0_1"/>
<dbReference type="InParanoid" id="Q9VBW6"/>
<dbReference type="OMA" id="HMNIRMG"/>
<dbReference type="OrthoDB" id="6624814at2759"/>
<dbReference type="PhylomeDB" id="Q9VBW6"/>
<dbReference type="SignaLink" id="Q9VBW6"/>
<dbReference type="BioGRID-ORCS" id="43023">
    <property type="hits" value="0 hits in 1 CRISPR screen"/>
</dbReference>
<dbReference type="EvolutionaryTrace" id="Q9VBW6"/>
<dbReference type="GenomeRNAi" id="43023"/>
<dbReference type="PRO" id="PR:Q9VBW6"/>
<dbReference type="Proteomes" id="UP000000803">
    <property type="component" value="Chromosome 3R"/>
</dbReference>
<dbReference type="Bgee" id="FBgn0039286">
    <property type="expression patterns" value="Expressed in eye disc (Drosophila) and 54 other cell types or tissues"/>
</dbReference>
<dbReference type="ExpressionAtlas" id="Q9VBW6">
    <property type="expression patterns" value="baseline and differential"/>
</dbReference>
<dbReference type="GO" id="GO:0005634">
    <property type="term" value="C:nucleus"/>
    <property type="evidence" value="ECO:0000314"/>
    <property type="project" value="UniProtKB"/>
</dbReference>
<dbReference type="GO" id="GO:0003677">
    <property type="term" value="F:DNA binding"/>
    <property type="evidence" value="ECO:0007669"/>
    <property type="project" value="UniProtKB-KW"/>
</dbReference>
<dbReference type="GO" id="GO:0003700">
    <property type="term" value="F:DNA-binding transcription factor activity"/>
    <property type="evidence" value="ECO:0000315"/>
    <property type="project" value="UniProtKB"/>
</dbReference>
<dbReference type="GO" id="GO:0007469">
    <property type="term" value="P:antennal development"/>
    <property type="evidence" value="ECO:0000315"/>
    <property type="project" value="UniProtKB"/>
</dbReference>
<dbReference type="GO" id="GO:0021556">
    <property type="term" value="P:central nervous system formation"/>
    <property type="evidence" value="ECO:0000315"/>
    <property type="project" value="FlyBase"/>
</dbReference>
<dbReference type="GO" id="GO:0048749">
    <property type="term" value="P:compound eye development"/>
    <property type="evidence" value="ECO:0000315"/>
    <property type="project" value="UniProtKB"/>
</dbReference>
<dbReference type="GO" id="GO:0006355">
    <property type="term" value="P:regulation of DNA-templated transcription"/>
    <property type="evidence" value="ECO:0000315"/>
    <property type="project" value="UniProtKB"/>
</dbReference>
<dbReference type="GO" id="GO:0007379">
    <property type="term" value="P:segment specification"/>
    <property type="evidence" value="ECO:0000315"/>
    <property type="project" value="UniProtKB"/>
</dbReference>
<dbReference type="FunFam" id="1.10.10.10:FF:000293">
    <property type="entry name" value="Tigger transposable element-derived protein 5"/>
    <property type="match status" value="1"/>
</dbReference>
<dbReference type="Gene3D" id="1.10.10.10">
    <property type="entry name" value="Winged helix-like DNA-binding domain superfamily/Winged helix DNA-binding domain"/>
    <property type="match status" value="1"/>
</dbReference>
<dbReference type="InterPro" id="IPR009057">
    <property type="entry name" value="Homeodomain-like_sf"/>
</dbReference>
<dbReference type="InterPro" id="IPR007889">
    <property type="entry name" value="HTH_Psq"/>
</dbReference>
<dbReference type="InterPro" id="IPR051839">
    <property type="entry name" value="RD_transcriptional_regulator"/>
</dbReference>
<dbReference type="InterPro" id="IPR036388">
    <property type="entry name" value="WH-like_DNA-bd_sf"/>
</dbReference>
<dbReference type="PANTHER" id="PTHR33215">
    <property type="entry name" value="PROTEIN DISTAL ANTENNA"/>
    <property type="match status" value="1"/>
</dbReference>
<dbReference type="PANTHER" id="PTHR33215:SF13">
    <property type="entry name" value="PROTEIN DISTAL ANTENNA"/>
    <property type="match status" value="1"/>
</dbReference>
<dbReference type="Pfam" id="PF04218">
    <property type="entry name" value="CENP-B_N"/>
    <property type="match status" value="1"/>
</dbReference>
<dbReference type="SUPFAM" id="SSF46689">
    <property type="entry name" value="Homeodomain-like"/>
    <property type="match status" value="1"/>
</dbReference>
<dbReference type="PROSITE" id="PS50960">
    <property type="entry name" value="HTH_PSQ"/>
    <property type="match status" value="1"/>
</dbReference>
<reference evidence="10" key="1">
    <citation type="journal article" date="2000" name="Science">
        <title>The genome sequence of Drosophila melanogaster.</title>
        <authorList>
            <person name="Adams M.D."/>
            <person name="Celniker S.E."/>
            <person name="Holt R.A."/>
            <person name="Evans C.A."/>
            <person name="Gocayne J.D."/>
            <person name="Amanatides P.G."/>
            <person name="Scherer S.E."/>
            <person name="Li P.W."/>
            <person name="Hoskins R.A."/>
            <person name="Galle R.F."/>
            <person name="George R.A."/>
            <person name="Lewis S.E."/>
            <person name="Richards S."/>
            <person name="Ashburner M."/>
            <person name="Henderson S.N."/>
            <person name="Sutton G.G."/>
            <person name="Wortman J.R."/>
            <person name="Yandell M.D."/>
            <person name="Zhang Q."/>
            <person name="Chen L.X."/>
            <person name="Brandon R.C."/>
            <person name="Rogers Y.-H.C."/>
            <person name="Blazej R.G."/>
            <person name="Champe M."/>
            <person name="Pfeiffer B.D."/>
            <person name="Wan K.H."/>
            <person name="Doyle C."/>
            <person name="Baxter E.G."/>
            <person name="Helt G."/>
            <person name="Nelson C.R."/>
            <person name="Miklos G.L.G."/>
            <person name="Abril J.F."/>
            <person name="Agbayani A."/>
            <person name="An H.-J."/>
            <person name="Andrews-Pfannkoch C."/>
            <person name="Baldwin D."/>
            <person name="Ballew R.M."/>
            <person name="Basu A."/>
            <person name="Baxendale J."/>
            <person name="Bayraktaroglu L."/>
            <person name="Beasley E.M."/>
            <person name="Beeson K.Y."/>
            <person name="Benos P.V."/>
            <person name="Berman B.P."/>
            <person name="Bhandari D."/>
            <person name="Bolshakov S."/>
            <person name="Borkova D."/>
            <person name="Botchan M.R."/>
            <person name="Bouck J."/>
            <person name="Brokstein P."/>
            <person name="Brottier P."/>
            <person name="Burtis K.C."/>
            <person name="Busam D.A."/>
            <person name="Butler H."/>
            <person name="Cadieu E."/>
            <person name="Center A."/>
            <person name="Chandra I."/>
            <person name="Cherry J.M."/>
            <person name="Cawley S."/>
            <person name="Dahlke C."/>
            <person name="Davenport L.B."/>
            <person name="Davies P."/>
            <person name="de Pablos B."/>
            <person name="Delcher A."/>
            <person name="Deng Z."/>
            <person name="Mays A.D."/>
            <person name="Dew I."/>
            <person name="Dietz S.M."/>
            <person name="Dodson K."/>
            <person name="Doup L.E."/>
            <person name="Downes M."/>
            <person name="Dugan-Rocha S."/>
            <person name="Dunkov B.C."/>
            <person name="Dunn P."/>
            <person name="Durbin K.J."/>
            <person name="Evangelista C.C."/>
            <person name="Ferraz C."/>
            <person name="Ferriera S."/>
            <person name="Fleischmann W."/>
            <person name="Fosler C."/>
            <person name="Gabrielian A.E."/>
            <person name="Garg N.S."/>
            <person name="Gelbart W.M."/>
            <person name="Glasser K."/>
            <person name="Glodek A."/>
            <person name="Gong F."/>
            <person name="Gorrell J.H."/>
            <person name="Gu Z."/>
            <person name="Guan P."/>
            <person name="Harris M."/>
            <person name="Harris N.L."/>
            <person name="Harvey D.A."/>
            <person name="Heiman T.J."/>
            <person name="Hernandez J.R."/>
            <person name="Houck J."/>
            <person name="Hostin D."/>
            <person name="Houston K.A."/>
            <person name="Howland T.J."/>
            <person name="Wei M.-H."/>
            <person name="Ibegwam C."/>
            <person name="Jalali M."/>
            <person name="Kalush F."/>
            <person name="Karpen G.H."/>
            <person name="Ke Z."/>
            <person name="Kennison J.A."/>
            <person name="Ketchum K.A."/>
            <person name="Kimmel B.E."/>
            <person name="Kodira C.D."/>
            <person name="Kraft C.L."/>
            <person name="Kravitz S."/>
            <person name="Kulp D."/>
            <person name="Lai Z."/>
            <person name="Lasko P."/>
            <person name="Lei Y."/>
            <person name="Levitsky A.A."/>
            <person name="Li J.H."/>
            <person name="Li Z."/>
            <person name="Liang Y."/>
            <person name="Lin X."/>
            <person name="Liu X."/>
            <person name="Mattei B."/>
            <person name="McIntosh T.C."/>
            <person name="McLeod M.P."/>
            <person name="McPherson D."/>
            <person name="Merkulov G."/>
            <person name="Milshina N.V."/>
            <person name="Mobarry C."/>
            <person name="Morris J."/>
            <person name="Moshrefi A."/>
            <person name="Mount S.M."/>
            <person name="Moy M."/>
            <person name="Murphy B."/>
            <person name="Murphy L."/>
            <person name="Muzny D.M."/>
            <person name="Nelson D.L."/>
            <person name="Nelson D.R."/>
            <person name="Nelson K.A."/>
            <person name="Nixon K."/>
            <person name="Nusskern D.R."/>
            <person name="Pacleb J.M."/>
            <person name="Palazzolo M."/>
            <person name="Pittman G.S."/>
            <person name="Pan S."/>
            <person name="Pollard J."/>
            <person name="Puri V."/>
            <person name="Reese M.G."/>
            <person name="Reinert K."/>
            <person name="Remington K."/>
            <person name="Saunders R.D.C."/>
            <person name="Scheeler F."/>
            <person name="Shen H."/>
            <person name="Shue B.C."/>
            <person name="Siden-Kiamos I."/>
            <person name="Simpson M."/>
            <person name="Skupski M.P."/>
            <person name="Smith T.J."/>
            <person name="Spier E."/>
            <person name="Spradling A.C."/>
            <person name="Stapleton M."/>
            <person name="Strong R."/>
            <person name="Sun E."/>
            <person name="Svirskas R."/>
            <person name="Tector C."/>
            <person name="Turner R."/>
            <person name="Venter E."/>
            <person name="Wang A.H."/>
            <person name="Wang X."/>
            <person name="Wang Z.-Y."/>
            <person name="Wassarman D.A."/>
            <person name="Weinstock G.M."/>
            <person name="Weissenbach J."/>
            <person name="Williams S.M."/>
            <person name="Woodage T."/>
            <person name="Worley K.C."/>
            <person name="Wu D."/>
            <person name="Yang S."/>
            <person name="Yao Q.A."/>
            <person name="Ye J."/>
            <person name="Yeh R.-F."/>
            <person name="Zaveri J.S."/>
            <person name="Zhan M."/>
            <person name="Zhang G."/>
            <person name="Zhao Q."/>
            <person name="Zheng L."/>
            <person name="Zheng X.H."/>
            <person name="Zhong F.N."/>
            <person name="Zhong W."/>
            <person name="Zhou X."/>
            <person name="Zhu S.C."/>
            <person name="Zhu X."/>
            <person name="Smith H.O."/>
            <person name="Gibbs R.A."/>
            <person name="Myers E.W."/>
            <person name="Rubin G.M."/>
            <person name="Venter J.C."/>
        </authorList>
    </citation>
    <scope>NUCLEOTIDE SEQUENCE [LARGE SCALE GENOMIC DNA]</scope>
    <source>
        <strain evidence="3">Berkeley</strain>
    </source>
</reference>
<reference evidence="9 10" key="2">
    <citation type="journal article" date="2002" name="Genome Biol.">
        <title>Annotation of the Drosophila melanogaster euchromatic genome: a systematic review.</title>
        <authorList>
            <person name="Misra S."/>
            <person name="Crosby M.A."/>
            <person name="Mungall C.J."/>
            <person name="Matthews B.B."/>
            <person name="Campbell K.S."/>
            <person name="Hradecky P."/>
            <person name="Huang Y."/>
            <person name="Kaminker J.S."/>
            <person name="Millburn G.H."/>
            <person name="Prochnik S.E."/>
            <person name="Smith C.D."/>
            <person name="Tupy J.L."/>
            <person name="Whitfield E.J."/>
            <person name="Bayraktaroglu L."/>
            <person name="Berman B.P."/>
            <person name="Bettencourt B.R."/>
            <person name="Celniker S.E."/>
            <person name="de Grey A.D.N.J."/>
            <person name="Drysdale R.A."/>
            <person name="Harris N.L."/>
            <person name="Richter J."/>
            <person name="Russo S."/>
            <person name="Schroeder A.J."/>
            <person name="Shu S.Q."/>
            <person name="Stapleton M."/>
            <person name="Yamada C."/>
            <person name="Ashburner M."/>
            <person name="Gelbart W.M."/>
            <person name="Rubin G.M."/>
            <person name="Lewis S.E."/>
        </authorList>
    </citation>
    <scope>GENOME REANNOTATION</scope>
    <source>
        <strain>Berkeley</strain>
    </source>
</reference>
<reference evidence="11" key="3">
    <citation type="journal article" date="2002" name="Genome Biol.">
        <title>A Drosophila full-length cDNA resource.</title>
        <authorList>
            <person name="Stapleton M."/>
            <person name="Carlson J.W."/>
            <person name="Brokstein P."/>
            <person name="Yu C."/>
            <person name="Champe M."/>
            <person name="George R.A."/>
            <person name="Guarin H."/>
            <person name="Kronmiller B."/>
            <person name="Pacleb J.M."/>
            <person name="Park S."/>
            <person name="Wan K.H."/>
            <person name="Rubin G.M."/>
            <person name="Celniker S.E."/>
        </authorList>
    </citation>
    <scope>NUCLEOTIDE SEQUENCE [LARGE SCALE MRNA]</scope>
    <source>
        <strain evidence="11">Berkeley</strain>
        <tissue evidence="4">Embryo</tissue>
    </source>
</reference>
<reference evidence="9" key="4">
    <citation type="journal article" date="2003" name="Development">
        <title>Distal antenna and distal antenna related encode nuclear proteins containing pipsqueak motifs involved in antenna development in Drosophila.</title>
        <authorList>
            <person name="Emerald B.S."/>
            <person name="Curtiss J."/>
            <person name="Mlodzik M."/>
            <person name="Cohen S.M."/>
        </authorList>
    </citation>
    <scope>FUNCTION</scope>
    <scope>SUBCELLULAR LOCATION</scope>
    <scope>DISRUPTION PHENOTYPE</scope>
    <scope>TISSUE SPECIFICITY</scope>
</reference>
<reference evidence="9" key="5">
    <citation type="journal article" date="2007" name="Dev. Biol.">
        <title>distal antenna and distal antenna-related function in the retinal determination network during eye development in Drosophila.</title>
        <authorList>
            <person name="Curtiss J."/>
            <person name="Burnett M."/>
            <person name="Mlodzik M."/>
        </authorList>
    </citation>
    <scope>FUNCTION</scope>
    <scope>SUBUNIT</scope>
    <scope>INTERACTION WITH DANR; EY AND DAC</scope>
    <scope>TISSUE SPECIFICITY</scope>
</reference>
<reference evidence="9" key="6">
    <citation type="journal article" date="2008" name="J. Proteome Res.">
        <title>Phosphoproteome analysis of Drosophila melanogaster embryos.</title>
        <authorList>
            <person name="Zhai B."/>
            <person name="Villen J."/>
            <person name="Beausoleil S.A."/>
            <person name="Mintseris J."/>
            <person name="Gygi S.P."/>
        </authorList>
    </citation>
    <scope>PHOSPHORYLATION [LARGE SCALE ANALYSIS] AT SER-251 AND SER-254</scope>
    <scope>IDENTIFICATION BY MASS SPECTROMETRY</scope>
    <source>
        <tissue evidence="7">Embryo</tissue>
    </source>
</reference>
<reference key="7">
    <citation type="submission" date="2008-04" db="PDB data bank">
        <title>Solution structure of the CENP-B N-terminal DNA-binding domain of fruit fly distal antenna CG11849-PA.</title>
        <authorList>
            <consortium name="RIKEN structural genomics initiative (RSGI)"/>
        </authorList>
    </citation>
    <scope>STRUCTURE BY NMR OF 1-80</scope>
</reference>
<accession>Q9VBW6</accession>
<accession>Q960P9</accession>
<organism>
    <name type="scientific">Drosophila melanogaster</name>
    <name type="common">Fruit fly</name>
    <dbReference type="NCBI Taxonomy" id="7227"/>
    <lineage>
        <taxon>Eukaryota</taxon>
        <taxon>Metazoa</taxon>
        <taxon>Ecdysozoa</taxon>
        <taxon>Arthropoda</taxon>
        <taxon>Hexapoda</taxon>
        <taxon>Insecta</taxon>
        <taxon>Pterygota</taxon>
        <taxon>Neoptera</taxon>
        <taxon>Endopterygota</taxon>
        <taxon>Diptera</taxon>
        <taxon>Brachycera</taxon>
        <taxon>Muscomorpha</taxon>
        <taxon>Ephydroidea</taxon>
        <taxon>Drosophilidae</taxon>
        <taxon>Drosophila</taxon>
        <taxon>Sophophora</taxon>
    </lineage>
</organism>
<feature type="chain" id="PRO_0000351200" description="Protein distal antenna">
    <location>
        <begin position="1"/>
        <end position="678"/>
    </location>
</feature>
<feature type="domain" description="HTH psq-type" evidence="1">
    <location>
        <begin position="7"/>
        <end position="58"/>
    </location>
</feature>
<feature type="DNA-binding region" description="H-T-H motif" evidence="1">
    <location>
        <begin position="34"/>
        <end position="54"/>
    </location>
</feature>
<feature type="region of interest" description="Disordered" evidence="2">
    <location>
        <begin position="232"/>
        <end position="310"/>
    </location>
</feature>
<feature type="region of interest" description="Disordered" evidence="2">
    <location>
        <begin position="344"/>
        <end position="381"/>
    </location>
</feature>
<feature type="region of interest" description="Disordered" evidence="2">
    <location>
        <begin position="445"/>
        <end position="528"/>
    </location>
</feature>
<feature type="region of interest" description="Disordered" evidence="2">
    <location>
        <begin position="541"/>
        <end position="592"/>
    </location>
</feature>
<feature type="region of interest" description="Disordered" evidence="2">
    <location>
        <begin position="645"/>
        <end position="678"/>
    </location>
</feature>
<feature type="compositionally biased region" description="Polar residues" evidence="2">
    <location>
        <begin position="241"/>
        <end position="254"/>
    </location>
</feature>
<feature type="compositionally biased region" description="Polar residues" evidence="2">
    <location>
        <begin position="349"/>
        <end position="363"/>
    </location>
</feature>
<feature type="compositionally biased region" description="Low complexity" evidence="2">
    <location>
        <begin position="372"/>
        <end position="381"/>
    </location>
</feature>
<feature type="compositionally biased region" description="Polar residues" evidence="2">
    <location>
        <begin position="449"/>
        <end position="461"/>
    </location>
</feature>
<feature type="compositionally biased region" description="Acidic residues" evidence="2">
    <location>
        <begin position="462"/>
        <end position="478"/>
    </location>
</feature>
<feature type="compositionally biased region" description="Polar residues" evidence="2">
    <location>
        <begin position="495"/>
        <end position="508"/>
    </location>
</feature>
<feature type="compositionally biased region" description="Low complexity" evidence="2">
    <location>
        <begin position="570"/>
        <end position="586"/>
    </location>
</feature>
<feature type="compositionally biased region" description="Acidic residues" evidence="2">
    <location>
        <begin position="657"/>
        <end position="667"/>
    </location>
</feature>
<feature type="modified residue" description="Phosphoserine" evidence="7">
    <location>
        <position position="251"/>
    </location>
</feature>
<feature type="modified residue" description="Phosphoserine" evidence="7">
    <location>
        <position position="254"/>
    </location>
</feature>
<feature type="helix" evidence="13">
    <location>
        <begin position="18"/>
        <end position="30"/>
    </location>
</feature>
<feature type="helix" evidence="13">
    <location>
        <begin position="34"/>
        <end position="41"/>
    </location>
</feature>
<feature type="helix" evidence="13">
    <location>
        <begin position="45"/>
        <end position="61"/>
    </location>
</feature>
<gene>
    <name evidence="10 12" type="primary">dan</name>
    <name type="ORF">CG11849</name>
</gene>
<evidence type="ECO:0000255" key="1">
    <source>
        <dbReference type="PROSITE-ProRule" id="PRU00320"/>
    </source>
</evidence>
<evidence type="ECO:0000256" key="2">
    <source>
        <dbReference type="SAM" id="MobiDB-lite"/>
    </source>
</evidence>
<evidence type="ECO:0000269" key="3">
    <source>
    </source>
</evidence>
<evidence type="ECO:0000269" key="4">
    <source>
    </source>
</evidence>
<evidence type="ECO:0000269" key="5">
    <source>
    </source>
</evidence>
<evidence type="ECO:0000269" key="6">
    <source>
    </source>
</evidence>
<evidence type="ECO:0000269" key="7">
    <source>
    </source>
</evidence>
<evidence type="ECO:0000303" key="8">
    <source>
    </source>
</evidence>
<evidence type="ECO:0000305" key="9"/>
<evidence type="ECO:0000312" key="10">
    <source>
        <dbReference type="EMBL" id="AAF56411.2"/>
    </source>
</evidence>
<evidence type="ECO:0000312" key="11">
    <source>
        <dbReference type="EMBL" id="AAK93348.1"/>
    </source>
</evidence>
<evidence type="ECO:0000312" key="12">
    <source>
        <dbReference type="FlyBase" id="FBgn0039286"/>
    </source>
</evidence>
<evidence type="ECO:0007829" key="13">
    <source>
        <dbReference type="PDB" id="2ELH"/>
    </source>
</evidence>
<keyword id="KW-0002">3D-structure</keyword>
<keyword id="KW-0217">Developmental protein</keyword>
<keyword id="KW-0238">DNA-binding</keyword>
<keyword id="KW-0539">Nucleus</keyword>
<keyword id="KW-0597">Phosphoprotein</keyword>
<keyword id="KW-1185">Reference proteome</keyword>
<keyword id="KW-0804">Transcription</keyword>
<keyword id="KW-0805">Transcription regulation</keyword>
<name>DAN_DROME</name>